<keyword id="KW-0007">Acetylation</keyword>
<keyword id="KW-0067">ATP-binding</keyword>
<keyword id="KW-0963">Cytoplasm</keyword>
<keyword id="KW-0206">Cytoskeleton</keyword>
<keyword id="KW-0378">Hydrolase</keyword>
<keyword id="KW-0547">Nucleotide-binding</keyword>
<keyword id="KW-1185">Reference proteome</keyword>
<protein>
    <recommendedName>
        <fullName>Actin, cytoskeletal 3A</fullName>
        <ecNumber evidence="2">3.6.4.-</ecNumber>
    </recommendedName>
    <alternativeName>
        <fullName>Actin, cytoskeletal IIIA</fullName>
    </alternativeName>
</protein>
<proteinExistence type="inferred from homology"/>
<feature type="propeptide" id="PRO_0000000730" description="Removed in mature form">
    <location>
        <begin position="1"/>
        <end position="2"/>
    </location>
</feature>
<feature type="chain" id="PRO_0000000731" description="Actin, cytoskeletal 3A">
    <location>
        <begin position="3"/>
        <end position="376"/>
    </location>
</feature>
<feature type="modified residue" description="N-acetylaspartate" evidence="1">
    <location>
        <position position="3"/>
    </location>
</feature>
<feature type="unsure residue">
    <location>
        <position position="112"/>
    </location>
</feature>
<feature type="unsure residue">
    <location>
        <position position="122"/>
    </location>
</feature>
<feature type="unsure residue">
    <location>
        <position position="144"/>
    </location>
</feature>
<feature type="unsure residue">
    <location>
        <position position="277"/>
    </location>
</feature>
<feature type="unsure residue">
    <location>
        <position position="286"/>
    </location>
</feature>
<dbReference type="EC" id="3.6.4.-" evidence="2"/>
<dbReference type="EMBL" id="M30511">
    <property type="protein sequence ID" value="AAA30030.1"/>
    <property type="molecule type" value="Genomic_DNA"/>
</dbReference>
<dbReference type="EMBL" id="M29808">
    <property type="protein sequence ID" value="AAA30030.1"/>
    <property type="status" value="JOINED"/>
    <property type="molecule type" value="Genomic_DNA"/>
</dbReference>
<dbReference type="RefSeq" id="NP_999694.1">
    <property type="nucleotide sequence ID" value="NM_214529.1"/>
</dbReference>
<dbReference type="SMR" id="P53474"/>
<dbReference type="FunCoup" id="P53474">
    <property type="interactions" value="1849"/>
</dbReference>
<dbReference type="STRING" id="7668.P53474"/>
<dbReference type="GeneID" id="373298"/>
<dbReference type="KEGG" id="spu:373298"/>
<dbReference type="CTD" id="373298"/>
<dbReference type="HOGENOM" id="CLU_027965_0_2_1"/>
<dbReference type="InParanoid" id="P53474"/>
<dbReference type="OrthoDB" id="10249208at2759"/>
<dbReference type="Proteomes" id="UP000007110">
    <property type="component" value="Unassembled WGS sequence"/>
</dbReference>
<dbReference type="GO" id="GO:0005737">
    <property type="term" value="C:cytoplasm"/>
    <property type="evidence" value="ECO:0007669"/>
    <property type="project" value="UniProtKB-SubCell"/>
</dbReference>
<dbReference type="GO" id="GO:0005856">
    <property type="term" value="C:cytoskeleton"/>
    <property type="evidence" value="ECO:0007669"/>
    <property type="project" value="UniProtKB-SubCell"/>
</dbReference>
<dbReference type="GO" id="GO:0005524">
    <property type="term" value="F:ATP binding"/>
    <property type="evidence" value="ECO:0007669"/>
    <property type="project" value="UniProtKB-KW"/>
</dbReference>
<dbReference type="GO" id="GO:0016787">
    <property type="term" value="F:hydrolase activity"/>
    <property type="evidence" value="ECO:0007669"/>
    <property type="project" value="UniProtKB-KW"/>
</dbReference>
<dbReference type="CDD" id="cd10224">
    <property type="entry name" value="ASKHA_NBD_actin"/>
    <property type="match status" value="1"/>
</dbReference>
<dbReference type="FunFam" id="3.30.420.40:FF:000291">
    <property type="entry name" value="Actin, alpha skeletal muscle"/>
    <property type="match status" value="1"/>
</dbReference>
<dbReference type="FunFam" id="3.90.640.10:FF:000047">
    <property type="entry name" value="Actin, alpha skeletal muscle"/>
    <property type="match status" value="1"/>
</dbReference>
<dbReference type="FunFam" id="3.30.420.40:FF:000404">
    <property type="entry name" value="Major actin"/>
    <property type="match status" value="1"/>
</dbReference>
<dbReference type="FunFam" id="3.30.420.40:FF:000058">
    <property type="entry name" value="Putative actin-related protein 5"/>
    <property type="match status" value="1"/>
</dbReference>
<dbReference type="Gene3D" id="3.30.420.40">
    <property type="match status" value="2"/>
</dbReference>
<dbReference type="Gene3D" id="3.90.640.10">
    <property type="entry name" value="Actin, Chain A, domain 4"/>
    <property type="match status" value="1"/>
</dbReference>
<dbReference type="InterPro" id="IPR004000">
    <property type="entry name" value="Actin"/>
</dbReference>
<dbReference type="InterPro" id="IPR020902">
    <property type="entry name" value="Actin/actin-like_CS"/>
</dbReference>
<dbReference type="InterPro" id="IPR004001">
    <property type="entry name" value="Actin_CS"/>
</dbReference>
<dbReference type="InterPro" id="IPR043129">
    <property type="entry name" value="ATPase_NBD"/>
</dbReference>
<dbReference type="PANTHER" id="PTHR11937">
    <property type="entry name" value="ACTIN"/>
    <property type="match status" value="1"/>
</dbReference>
<dbReference type="Pfam" id="PF00022">
    <property type="entry name" value="Actin"/>
    <property type="match status" value="1"/>
</dbReference>
<dbReference type="PRINTS" id="PR00190">
    <property type="entry name" value="ACTIN"/>
</dbReference>
<dbReference type="SMART" id="SM00268">
    <property type="entry name" value="ACTIN"/>
    <property type="match status" value="1"/>
</dbReference>
<dbReference type="SUPFAM" id="SSF53067">
    <property type="entry name" value="Actin-like ATPase domain"/>
    <property type="match status" value="2"/>
</dbReference>
<dbReference type="PROSITE" id="PS00406">
    <property type="entry name" value="ACTINS_1"/>
    <property type="match status" value="1"/>
</dbReference>
<dbReference type="PROSITE" id="PS00432">
    <property type="entry name" value="ACTINS_2"/>
    <property type="match status" value="1"/>
</dbReference>
<dbReference type="PROSITE" id="PS01132">
    <property type="entry name" value="ACTINS_ACT_LIKE"/>
    <property type="match status" value="1"/>
</dbReference>
<comment type="function">
    <text>Actins are highly conserved proteins that are involved in various types of cell motility and are ubiquitously expressed in all eukaryotic cells.</text>
</comment>
<comment type="catalytic activity">
    <reaction evidence="2">
        <text>ATP + H2O = ADP + phosphate + H(+)</text>
        <dbReference type="Rhea" id="RHEA:13065"/>
        <dbReference type="ChEBI" id="CHEBI:15377"/>
        <dbReference type="ChEBI" id="CHEBI:15378"/>
        <dbReference type="ChEBI" id="CHEBI:30616"/>
        <dbReference type="ChEBI" id="CHEBI:43474"/>
        <dbReference type="ChEBI" id="CHEBI:456216"/>
    </reaction>
</comment>
<comment type="subcellular location">
    <subcellularLocation>
        <location>Cytoplasm</location>
    </subcellularLocation>
    <subcellularLocation>
        <location>Cytoplasm</location>
        <location>Cytoskeleton</location>
    </subcellularLocation>
</comment>
<comment type="similarity">
    <text evidence="3">Belongs to the actin family.</text>
</comment>
<accession>P53474</accession>
<evidence type="ECO:0000250" key="1"/>
<evidence type="ECO:0000250" key="2">
    <source>
        <dbReference type="UniProtKB" id="P68137"/>
    </source>
</evidence>
<evidence type="ECO:0000305" key="3"/>
<reference key="1">
    <citation type="journal article" date="1987" name="J. Mol. Biol.">
        <title>Structure and organization of the CyIII actin gene subfamily of the sea urchin, Strongylocentrotus purpuratus.</title>
        <authorList>
            <person name="Akhurst R.J."/>
            <person name="Calzone F.J."/>
            <person name="Lee J.J."/>
            <person name="Britten R.J."/>
            <person name="Davidson E.H."/>
        </authorList>
    </citation>
    <scope>NUCLEOTIDE SEQUENCE [GENOMIC DNA]</scope>
</reference>
<name>ACTE_STRPU</name>
<sequence length="376" mass="41904">MCDDDVAALVVDNGSGMVKAGFAGDDAPRAVFPSIVGRPRHQGVMVGMGQKDSYVGDEAQSKRGILTLKYPIEHGIVTNWDDMEKIWHHTFYNELRVAPEEHPVLLTEAPLNPKANREKMTQIMFETFNSPAMYVAIQAVLSLYASGRTTGIVFDSGDGVSHTVPIYEGYALPHAIIRLDLAGRDLTDYLMKILTERGYSFTTTAEREIVRDIKEKLCYVALDFEQEMQTAASSSSLEKSYELPDGQVITIGNERFRASETLFQPSFIGMESAGIHETCYNRIMKCDVDIRKDLYVNTVLSGGSTMFPGIADRMQKEISALAPPTMKIKIIAPPERKYSVWIGGSILASLSTFQQMWISKQEYDESGPSIVHRKCF</sequence>
<organism>
    <name type="scientific">Strongylocentrotus purpuratus</name>
    <name type="common">Purple sea urchin</name>
    <dbReference type="NCBI Taxonomy" id="7668"/>
    <lineage>
        <taxon>Eukaryota</taxon>
        <taxon>Metazoa</taxon>
        <taxon>Echinodermata</taxon>
        <taxon>Eleutherozoa</taxon>
        <taxon>Echinozoa</taxon>
        <taxon>Echinoidea</taxon>
        <taxon>Euechinoidea</taxon>
        <taxon>Echinacea</taxon>
        <taxon>Camarodonta</taxon>
        <taxon>Echinidea</taxon>
        <taxon>Strongylocentrotidae</taxon>
        <taxon>Strongylocentrotus</taxon>
    </lineage>
</organism>
<gene>
    <name type="primary">CYIIIA</name>
</gene>